<organism>
    <name type="scientific">Anoxybacillus flavithermus (strain DSM 21510 / WK1)</name>
    <dbReference type="NCBI Taxonomy" id="491915"/>
    <lineage>
        <taxon>Bacteria</taxon>
        <taxon>Bacillati</taxon>
        <taxon>Bacillota</taxon>
        <taxon>Bacilli</taxon>
        <taxon>Bacillales</taxon>
        <taxon>Anoxybacillaceae</taxon>
        <taxon>Anoxybacillus</taxon>
    </lineage>
</organism>
<evidence type="ECO:0000255" key="1">
    <source>
        <dbReference type="HAMAP-Rule" id="MF_00023"/>
    </source>
</evidence>
<evidence type="ECO:0000256" key="2">
    <source>
        <dbReference type="SAM" id="MobiDB-lite"/>
    </source>
</evidence>
<name>SSRP_ANOFW</name>
<sequence>MPKGEGKLIAQNKKAHHDYFIEETYEAGLVLQGTEIKSIRAGKVNLKDSFAKVEKGEVFLHNMHISPYEQGNRYNHDPLRTRKLLLHRREISKLIGYTKEQGYTLVPLKLYIKNGFAKLLLGVGKGKKKYDKREDMKKKEAQREVERAFRERQK</sequence>
<protein>
    <recommendedName>
        <fullName evidence="1">SsrA-binding protein</fullName>
    </recommendedName>
    <alternativeName>
        <fullName evidence="1">Small protein B</fullName>
    </alternativeName>
</protein>
<gene>
    <name evidence="1" type="primary">smpB</name>
    <name type="ordered locus">Aflv_2497</name>
</gene>
<proteinExistence type="inferred from homology"/>
<comment type="function">
    <text evidence="1">Required for rescue of stalled ribosomes mediated by trans-translation. Binds to transfer-messenger RNA (tmRNA), required for stable association of tmRNA with ribosomes. tmRNA and SmpB together mimic tRNA shape, replacing the anticodon stem-loop with SmpB. tmRNA is encoded by the ssrA gene; the 2 termini fold to resemble tRNA(Ala) and it encodes a 'tag peptide', a short internal open reading frame. During trans-translation Ala-aminoacylated tmRNA acts like a tRNA, entering the A-site of stalled ribosomes, displacing the stalled mRNA. The ribosome then switches to translate the ORF on the tmRNA; the nascent peptide is terminated with the 'tag peptide' encoded by the tmRNA and targeted for degradation. The ribosome is freed to recommence translation, which seems to be the essential function of trans-translation.</text>
</comment>
<comment type="subcellular location">
    <subcellularLocation>
        <location evidence="1">Cytoplasm</location>
    </subcellularLocation>
    <text evidence="1">The tmRNA-SmpB complex associates with stalled 70S ribosomes.</text>
</comment>
<comment type="similarity">
    <text evidence="1">Belongs to the SmpB family.</text>
</comment>
<dbReference type="EMBL" id="CP000922">
    <property type="protein sequence ID" value="ACJ34852.1"/>
    <property type="molecule type" value="Genomic_DNA"/>
</dbReference>
<dbReference type="RefSeq" id="WP_004892472.1">
    <property type="nucleotide sequence ID" value="NC_011567.1"/>
</dbReference>
<dbReference type="SMR" id="B7GLX3"/>
<dbReference type="STRING" id="491915.Aflv_2497"/>
<dbReference type="GeneID" id="7038770"/>
<dbReference type="KEGG" id="afl:Aflv_2497"/>
<dbReference type="eggNOG" id="COG0691">
    <property type="taxonomic scope" value="Bacteria"/>
</dbReference>
<dbReference type="HOGENOM" id="CLU_108953_0_0_9"/>
<dbReference type="Proteomes" id="UP000000742">
    <property type="component" value="Chromosome"/>
</dbReference>
<dbReference type="GO" id="GO:0005829">
    <property type="term" value="C:cytosol"/>
    <property type="evidence" value="ECO:0007669"/>
    <property type="project" value="TreeGrafter"/>
</dbReference>
<dbReference type="GO" id="GO:0003723">
    <property type="term" value="F:RNA binding"/>
    <property type="evidence" value="ECO:0007669"/>
    <property type="project" value="UniProtKB-UniRule"/>
</dbReference>
<dbReference type="GO" id="GO:0070929">
    <property type="term" value="P:trans-translation"/>
    <property type="evidence" value="ECO:0007669"/>
    <property type="project" value="UniProtKB-UniRule"/>
</dbReference>
<dbReference type="CDD" id="cd09294">
    <property type="entry name" value="SmpB"/>
    <property type="match status" value="1"/>
</dbReference>
<dbReference type="Gene3D" id="2.40.280.10">
    <property type="match status" value="1"/>
</dbReference>
<dbReference type="HAMAP" id="MF_00023">
    <property type="entry name" value="SmpB"/>
    <property type="match status" value="1"/>
</dbReference>
<dbReference type="InterPro" id="IPR023620">
    <property type="entry name" value="SmpB"/>
</dbReference>
<dbReference type="InterPro" id="IPR000037">
    <property type="entry name" value="SsrA-bd_prot"/>
</dbReference>
<dbReference type="InterPro" id="IPR020081">
    <property type="entry name" value="SsrA-bd_prot_CS"/>
</dbReference>
<dbReference type="NCBIfam" id="NF003843">
    <property type="entry name" value="PRK05422.1"/>
    <property type="match status" value="1"/>
</dbReference>
<dbReference type="NCBIfam" id="TIGR00086">
    <property type="entry name" value="smpB"/>
    <property type="match status" value="1"/>
</dbReference>
<dbReference type="PANTHER" id="PTHR30308:SF2">
    <property type="entry name" value="SSRA-BINDING PROTEIN"/>
    <property type="match status" value="1"/>
</dbReference>
<dbReference type="PANTHER" id="PTHR30308">
    <property type="entry name" value="TMRNA-BINDING COMPONENT OF TRANS-TRANSLATION TAGGING COMPLEX"/>
    <property type="match status" value="1"/>
</dbReference>
<dbReference type="Pfam" id="PF01668">
    <property type="entry name" value="SmpB"/>
    <property type="match status" value="1"/>
</dbReference>
<dbReference type="SUPFAM" id="SSF74982">
    <property type="entry name" value="Small protein B (SmpB)"/>
    <property type="match status" value="1"/>
</dbReference>
<dbReference type="PROSITE" id="PS01317">
    <property type="entry name" value="SSRP"/>
    <property type="match status" value="1"/>
</dbReference>
<accession>B7GLX3</accession>
<keyword id="KW-0963">Cytoplasm</keyword>
<keyword id="KW-0694">RNA-binding</keyword>
<feature type="chain" id="PRO_1000116411" description="SsrA-binding protein">
    <location>
        <begin position="1"/>
        <end position="154"/>
    </location>
</feature>
<feature type="region of interest" description="Disordered" evidence="2">
    <location>
        <begin position="126"/>
        <end position="154"/>
    </location>
</feature>
<feature type="compositionally biased region" description="Basic and acidic residues" evidence="2">
    <location>
        <begin position="131"/>
        <end position="154"/>
    </location>
</feature>
<reference key="1">
    <citation type="journal article" date="2008" name="Genome Biol.">
        <title>Encapsulated in silica: genome, proteome and physiology of the thermophilic bacterium Anoxybacillus flavithermus WK1.</title>
        <authorList>
            <person name="Saw J.H."/>
            <person name="Mountain B.W."/>
            <person name="Feng L."/>
            <person name="Omelchenko M.V."/>
            <person name="Hou S."/>
            <person name="Saito J.A."/>
            <person name="Stott M.B."/>
            <person name="Li D."/>
            <person name="Zhao G."/>
            <person name="Wu J."/>
            <person name="Galperin M.Y."/>
            <person name="Koonin E.V."/>
            <person name="Makarova K.S."/>
            <person name="Wolf Y.I."/>
            <person name="Rigden D.J."/>
            <person name="Dunfield P.F."/>
            <person name="Wang L."/>
            <person name="Alam M."/>
        </authorList>
    </citation>
    <scope>NUCLEOTIDE SEQUENCE [LARGE SCALE GENOMIC DNA]</scope>
    <source>
        <strain>DSM 21510 / WK1</strain>
    </source>
</reference>